<gene>
    <name type="primary">recX</name>
    <name type="ordered locus">TP_1023</name>
</gene>
<comment type="function">
    <text evidence="1">Modulates RecA activity.</text>
</comment>
<comment type="subcellular location">
    <subcellularLocation>
        <location evidence="2">Cytoplasm</location>
    </subcellularLocation>
</comment>
<comment type="similarity">
    <text evidence="2">Belongs to the RecX family.</text>
</comment>
<keyword id="KW-0963">Cytoplasm</keyword>
<keyword id="KW-1185">Reference proteome</keyword>
<reference key="1">
    <citation type="journal article" date="1998" name="Science">
        <title>Complete genome sequence of Treponema pallidum, the syphilis spirochete.</title>
        <authorList>
            <person name="Fraser C.M."/>
            <person name="Norris S.J."/>
            <person name="Weinstock G.M."/>
            <person name="White O."/>
            <person name="Sutton G.G."/>
            <person name="Dodson R.J."/>
            <person name="Gwinn M.L."/>
            <person name="Hickey E.K."/>
            <person name="Clayton R.A."/>
            <person name="Ketchum K.A."/>
            <person name="Sodergren E."/>
            <person name="Hardham J.M."/>
            <person name="McLeod M.P."/>
            <person name="Salzberg S.L."/>
            <person name="Peterson J.D."/>
            <person name="Khalak H.G."/>
            <person name="Richardson D.L."/>
            <person name="Howell J.K."/>
            <person name="Chidambaram M."/>
            <person name="Utterback T.R."/>
            <person name="McDonald L.A."/>
            <person name="Artiach P."/>
            <person name="Bowman C."/>
            <person name="Cotton M.D."/>
            <person name="Fujii C."/>
            <person name="Garland S.A."/>
            <person name="Hatch B."/>
            <person name="Horst K."/>
            <person name="Roberts K.M."/>
            <person name="Sandusky M."/>
            <person name="Weidman J.F."/>
            <person name="Smith H.O."/>
            <person name="Venter J.C."/>
        </authorList>
    </citation>
    <scope>NUCLEOTIDE SEQUENCE [LARGE SCALE GENOMIC DNA]</scope>
    <source>
        <strain>Nichols</strain>
    </source>
</reference>
<protein>
    <recommendedName>
        <fullName>Regulatory protein RecX</fullName>
    </recommendedName>
</protein>
<dbReference type="EMBL" id="AE000520">
    <property type="protein sequence ID" value="AAC65974.1"/>
    <property type="molecule type" value="Genomic_DNA"/>
</dbReference>
<dbReference type="PIR" id="B71251">
    <property type="entry name" value="B71251"/>
</dbReference>
<dbReference type="SMR" id="O83986"/>
<dbReference type="IntAct" id="O83986">
    <property type="interactions" value="15"/>
</dbReference>
<dbReference type="STRING" id="243276.TP_1023"/>
<dbReference type="EnsemblBacteria" id="AAC65974">
    <property type="protein sequence ID" value="AAC65974"/>
    <property type="gene ID" value="TP_1023"/>
</dbReference>
<dbReference type="KEGG" id="tpa:TP_1023"/>
<dbReference type="KEGG" id="tpw:TPANIC_1023"/>
<dbReference type="eggNOG" id="COG2137">
    <property type="taxonomic scope" value="Bacteria"/>
</dbReference>
<dbReference type="HOGENOM" id="CLU_066607_2_0_12"/>
<dbReference type="Proteomes" id="UP000000811">
    <property type="component" value="Chromosome"/>
</dbReference>
<dbReference type="GO" id="GO:0005737">
    <property type="term" value="C:cytoplasm"/>
    <property type="evidence" value="ECO:0007669"/>
    <property type="project" value="UniProtKB-SubCell"/>
</dbReference>
<dbReference type="GO" id="GO:0006282">
    <property type="term" value="P:regulation of DNA repair"/>
    <property type="evidence" value="ECO:0007669"/>
    <property type="project" value="UniProtKB-UniRule"/>
</dbReference>
<dbReference type="Gene3D" id="1.10.10.10">
    <property type="entry name" value="Winged helix-like DNA-binding domain superfamily/Winged helix DNA-binding domain"/>
    <property type="match status" value="2"/>
</dbReference>
<dbReference type="HAMAP" id="MF_01114">
    <property type="entry name" value="RecX"/>
    <property type="match status" value="1"/>
</dbReference>
<dbReference type="InterPro" id="IPR053924">
    <property type="entry name" value="RecX_HTH_2nd"/>
</dbReference>
<dbReference type="InterPro" id="IPR003783">
    <property type="entry name" value="Regulatory_RecX"/>
</dbReference>
<dbReference type="InterPro" id="IPR036388">
    <property type="entry name" value="WH-like_DNA-bd_sf"/>
</dbReference>
<dbReference type="NCBIfam" id="NF001062">
    <property type="entry name" value="PRK00117.5-2"/>
    <property type="match status" value="1"/>
</dbReference>
<dbReference type="PANTHER" id="PTHR33602">
    <property type="entry name" value="REGULATORY PROTEIN RECX FAMILY PROTEIN"/>
    <property type="match status" value="1"/>
</dbReference>
<dbReference type="PANTHER" id="PTHR33602:SF1">
    <property type="entry name" value="REGULATORY PROTEIN RECX FAMILY PROTEIN"/>
    <property type="match status" value="1"/>
</dbReference>
<dbReference type="Pfam" id="PF02631">
    <property type="entry name" value="RecX_HTH2"/>
    <property type="match status" value="1"/>
</dbReference>
<sequence length="164" mass="18874">MGTRPTDEQYGAVCFACRCYEAECVAVRLLARSETSAQQLGFKLLKRGFEKRVVESVFPVLKRYSWLDDTRFARAWLRNRVDSRPASRAQLLGELKRRGVSHADAEGALDLLFQEQDEETLCLRLLEKLRRRGYGPHTLQRALQRRQFSPSLVRRCLAVETEGA</sequence>
<organism>
    <name type="scientific">Treponema pallidum (strain Nichols)</name>
    <dbReference type="NCBI Taxonomy" id="243276"/>
    <lineage>
        <taxon>Bacteria</taxon>
        <taxon>Pseudomonadati</taxon>
        <taxon>Spirochaetota</taxon>
        <taxon>Spirochaetia</taxon>
        <taxon>Spirochaetales</taxon>
        <taxon>Treponemataceae</taxon>
        <taxon>Treponema</taxon>
    </lineage>
</organism>
<accession>O83986</accession>
<feature type="chain" id="PRO_0000162490" description="Regulatory protein RecX">
    <location>
        <begin position="1"/>
        <end position="164"/>
    </location>
</feature>
<name>RECX_TREPA</name>
<proteinExistence type="inferred from homology"/>
<evidence type="ECO:0000250" key="1"/>
<evidence type="ECO:0000305" key="2"/>